<geneLocation type="chloroplast"/>
<comment type="function">
    <text evidence="1">This protein binds specifically to 23S rRNA.</text>
</comment>
<comment type="function">
    <text evidence="1">The globular domain of the protein is located near the polypeptide exit tunnel on the outside of the subunit, while an extended beta-hairpin is found that lines the wall of the exit tunnel in the center of the 70S ribosome.</text>
</comment>
<comment type="subunit">
    <text evidence="1">Part of the 50S ribosomal subunit.</text>
</comment>
<comment type="subcellular location">
    <subcellularLocation>
        <location>Plastid</location>
        <location>Chloroplast</location>
    </subcellularLocation>
</comment>
<comment type="similarity">
    <text evidence="2">Belongs to the universal ribosomal protein uL22 family.</text>
</comment>
<accession>P24283</accession>
<accession>Q06FM5</accession>
<organism>
    <name type="scientific">Pelargonium hortorum</name>
    <name type="common">Common geranium</name>
    <name type="synonym">Pelargonium inquinans x Pelargonium zonale</name>
    <dbReference type="NCBI Taxonomy" id="4031"/>
    <lineage>
        <taxon>Eukaryota</taxon>
        <taxon>Viridiplantae</taxon>
        <taxon>Streptophyta</taxon>
        <taxon>Embryophyta</taxon>
        <taxon>Tracheophyta</taxon>
        <taxon>Spermatophyta</taxon>
        <taxon>Magnoliopsida</taxon>
        <taxon>eudicotyledons</taxon>
        <taxon>Gunneridae</taxon>
        <taxon>Pentapetalae</taxon>
        <taxon>rosids</taxon>
        <taxon>malvids</taxon>
        <taxon>Geraniales</taxon>
        <taxon>Geraniaceae</taxon>
        <taxon>Pelargonium</taxon>
    </lineage>
</organism>
<evidence type="ECO:0000250" key="1"/>
<evidence type="ECO:0000305" key="2"/>
<proteinExistence type="inferred from homology"/>
<keyword id="KW-0150">Chloroplast</keyword>
<keyword id="KW-0934">Plastid</keyword>
<keyword id="KW-0687">Ribonucleoprotein</keyword>
<keyword id="KW-0689">Ribosomal protein</keyword>
<keyword id="KW-0694">RNA-binding</keyword>
<keyword id="KW-0699">rRNA-binding</keyword>
<feature type="chain" id="PRO_0000125318" description="Large ribosomal subunit protein uL22c">
    <location>
        <begin position="1"/>
        <end position="149"/>
    </location>
</feature>
<feature type="sequence conflict" description="In Ref. 1; AAA84576." evidence="2" ref="1">
    <original>K</original>
    <variation>N</variation>
    <location>
        <position position="5"/>
    </location>
</feature>
<feature type="sequence conflict" description="In Ref. 1; AAA84576." evidence="2" ref="1">
    <original>SA</original>
    <variation>CR</variation>
    <location>
        <begin position="14"/>
        <end position="15"/>
    </location>
</feature>
<feature type="sequence conflict" description="In Ref. 1; AAA84576." evidence="2" ref="1">
    <original>P</original>
    <variation>G</variation>
    <location>
        <position position="21"/>
    </location>
</feature>
<feature type="sequence conflict" description="In Ref. 1; AAA84576." evidence="2" ref="1">
    <original>A</original>
    <variation>V</variation>
    <location>
        <position position="64"/>
    </location>
</feature>
<feature type="sequence conflict" description="In Ref. 1; AAA84576." evidence="2" ref="1">
    <original>RKPWALL</original>
    <variation>SENHGPS</variation>
    <location>
        <begin position="131"/>
        <end position="137"/>
    </location>
</feature>
<gene>
    <name type="primary">rpl22-A</name>
    <name type="synonym">cl22</name>
</gene>
<gene>
    <name type="primary">rpl22-B</name>
    <name type="synonym">cl22</name>
</gene>
<protein>
    <recommendedName>
        <fullName evidence="2">Large ribosomal subunit protein uL22c</fullName>
    </recommendedName>
    <alternativeName>
        <fullName>50S ribosomal protein L22, chloroplastic</fullName>
    </alternativeName>
</protein>
<sequence length="149" mass="17346">MIKKKNKKRYTEVSALGKYIPMSTHKARRVIDQIRGRSYEETLMILELMPYRACYPILKLISSAAANGIHNMNFDETSLIISKAEVNEGPTAKKFKPRAKGQSYPIKRSTCHITIVLRDISLNEKYEEYIRKPWALLEKSNETEIRKRN</sequence>
<reference key="1">
    <citation type="journal article" date="1991" name="EMBO J.">
        <title>Transfer of rpl22 to the nucleus greatly preceded its loss from the chloroplast and involved the gain of an intron.</title>
        <authorList>
            <person name="Gantt J.S."/>
            <person name="Baldauf S.L."/>
            <person name="Calie P.J."/>
            <person name="Weeden N.F."/>
            <person name="Palmer J.D."/>
        </authorList>
    </citation>
    <scope>NUCLEOTIDE SEQUENCE [GENOMIC DNA]</scope>
</reference>
<reference key="2">
    <citation type="journal article" date="2006" name="Mol. Biol. Evol.">
        <title>The complete chloroplast genome sequence of Pelargonium x hortorum: organization and evolution of the largest and most highly rearranged chloroplast genome of land plants.</title>
        <authorList>
            <person name="Chumley T.W."/>
            <person name="Palmer J.D."/>
            <person name="Mower J.P."/>
            <person name="Fourcade H.M."/>
            <person name="Calie P.J."/>
            <person name="Boore J.L."/>
            <person name="Jansen R.K."/>
        </authorList>
    </citation>
    <scope>NUCLEOTIDE SEQUENCE [LARGE SCALE GENOMIC DNA]</scope>
    <source>
        <strain>cv. Ringo White</strain>
    </source>
</reference>
<dbReference type="EMBL" id="M60953">
    <property type="protein sequence ID" value="AAA84576.1"/>
    <property type="molecule type" value="Genomic_DNA"/>
</dbReference>
<dbReference type="EMBL" id="DQ897681">
    <property type="protein sequence ID" value="ABI17292.1"/>
    <property type="molecule type" value="Genomic_DNA"/>
</dbReference>
<dbReference type="EMBL" id="DQ897681">
    <property type="protein sequence ID" value="ABI17348.1"/>
    <property type="molecule type" value="Genomic_DNA"/>
</dbReference>
<dbReference type="SMR" id="P24283"/>
<dbReference type="GO" id="GO:0009507">
    <property type="term" value="C:chloroplast"/>
    <property type="evidence" value="ECO:0007669"/>
    <property type="project" value="UniProtKB-SubCell"/>
</dbReference>
<dbReference type="GO" id="GO:0015934">
    <property type="term" value="C:large ribosomal subunit"/>
    <property type="evidence" value="ECO:0007669"/>
    <property type="project" value="InterPro"/>
</dbReference>
<dbReference type="GO" id="GO:0019843">
    <property type="term" value="F:rRNA binding"/>
    <property type="evidence" value="ECO:0007669"/>
    <property type="project" value="UniProtKB-UniRule"/>
</dbReference>
<dbReference type="GO" id="GO:0003735">
    <property type="term" value="F:structural constituent of ribosome"/>
    <property type="evidence" value="ECO:0007669"/>
    <property type="project" value="InterPro"/>
</dbReference>
<dbReference type="GO" id="GO:0006412">
    <property type="term" value="P:translation"/>
    <property type="evidence" value="ECO:0007669"/>
    <property type="project" value="UniProtKB-UniRule"/>
</dbReference>
<dbReference type="CDD" id="cd00336">
    <property type="entry name" value="Ribosomal_L22"/>
    <property type="match status" value="1"/>
</dbReference>
<dbReference type="FunFam" id="3.90.470.10:FF:000006">
    <property type="entry name" value="50S ribosomal protein L22, chloroplastic"/>
    <property type="match status" value="1"/>
</dbReference>
<dbReference type="Gene3D" id="3.90.470.10">
    <property type="entry name" value="Ribosomal protein L22/L17"/>
    <property type="match status" value="1"/>
</dbReference>
<dbReference type="HAMAP" id="MF_01331_B">
    <property type="entry name" value="Ribosomal_uL22_B"/>
    <property type="match status" value="1"/>
</dbReference>
<dbReference type="InterPro" id="IPR001063">
    <property type="entry name" value="Ribosomal_uL22"/>
</dbReference>
<dbReference type="InterPro" id="IPR005727">
    <property type="entry name" value="Ribosomal_uL22_bac/chlpt-type"/>
</dbReference>
<dbReference type="InterPro" id="IPR047867">
    <property type="entry name" value="Ribosomal_uL22_bac/org-type"/>
</dbReference>
<dbReference type="InterPro" id="IPR018260">
    <property type="entry name" value="Ribosomal_uL22_CS"/>
</dbReference>
<dbReference type="InterPro" id="IPR036394">
    <property type="entry name" value="Ribosomal_uL22_sf"/>
</dbReference>
<dbReference type="NCBIfam" id="TIGR01044">
    <property type="entry name" value="rplV_bact"/>
    <property type="match status" value="1"/>
</dbReference>
<dbReference type="PANTHER" id="PTHR13501">
    <property type="entry name" value="CHLOROPLAST 50S RIBOSOMAL PROTEIN L22-RELATED"/>
    <property type="match status" value="1"/>
</dbReference>
<dbReference type="PANTHER" id="PTHR13501:SF10">
    <property type="entry name" value="LARGE RIBOSOMAL SUBUNIT PROTEIN UL22M"/>
    <property type="match status" value="1"/>
</dbReference>
<dbReference type="Pfam" id="PF00237">
    <property type="entry name" value="Ribosomal_L22"/>
    <property type="match status" value="1"/>
</dbReference>
<dbReference type="SUPFAM" id="SSF54843">
    <property type="entry name" value="Ribosomal protein L22"/>
    <property type="match status" value="1"/>
</dbReference>
<dbReference type="PROSITE" id="PS00464">
    <property type="entry name" value="RIBOSOMAL_L22"/>
    <property type="match status" value="1"/>
</dbReference>
<name>RK22_PELHO</name>